<feature type="chain" id="PRO_1000073501" description="Peptide methionine sulfoxide reductase MsrA">
    <location>
        <begin position="1"/>
        <end position="175"/>
    </location>
</feature>
<feature type="active site" evidence="1">
    <location>
        <position position="10"/>
    </location>
</feature>
<name>MSRA_PSYWF</name>
<evidence type="ECO:0000255" key="1">
    <source>
        <dbReference type="HAMAP-Rule" id="MF_01401"/>
    </source>
</evidence>
<sequence>MQTIILGGGCFWCTESVFQSVKGVQKVTSGYMGGEDANLANYKDVCSGTTGHIEVVRVDFDDTIVPLEVVLDIFFATHDPTTRDRQGNDIGSQYRSVVFYTDEETQKPTIDRTINKLRDMGLDIVTEVHPVHEFHVAEDYHQDYFNKNPTQGYCQAVIPPKLGKLRKEFKQYMAK</sequence>
<protein>
    <recommendedName>
        <fullName evidence="1">Peptide methionine sulfoxide reductase MsrA</fullName>
        <shortName evidence="1">Protein-methionine-S-oxide reductase</shortName>
        <ecNumber evidence="1">1.8.4.11</ecNumber>
    </recommendedName>
    <alternativeName>
        <fullName evidence="1">Peptide-methionine (S)-S-oxide reductase</fullName>
        <shortName evidence="1">Peptide Met(O) reductase</shortName>
    </alternativeName>
</protein>
<dbReference type="EC" id="1.8.4.11" evidence="1"/>
<dbReference type="EMBL" id="CP000713">
    <property type="protein sequence ID" value="ABQ93244.1"/>
    <property type="molecule type" value="Genomic_DNA"/>
</dbReference>
<dbReference type="SMR" id="A5WC53"/>
<dbReference type="STRING" id="349106.PsycPRwf_0289"/>
<dbReference type="KEGG" id="prw:PsycPRwf_0289"/>
<dbReference type="eggNOG" id="COG0225">
    <property type="taxonomic scope" value="Bacteria"/>
</dbReference>
<dbReference type="HOGENOM" id="CLU_031040_10_0_6"/>
<dbReference type="GO" id="GO:0033744">
    <property type="term" value="F:L-methionine:thioredoxin-disulfide S-oxidoreductase activity"/>
    <property type="evidence" value="ECO:0007669"/>
    <property type="project" value="RHEA"/>
</dbReference>
<dbReference type="GO" id="GO:0008113">
    <property type="term" value="F:peptide-methionine (S)-S-oxide reductase activity"/>
    <property type="evidence" value="ECO:0007669"/>
    <property type="project" value="UniProtKB-UniRule"/>
</dbReference>
<dbReference type="GO" id="GO:0036211">
    <property type="term" value="P:protein modification process"/>
    <property type="evidence" value="ECO:0007669"/>
    <property type="project" value="UniProtKB-UniRule"/>
</dbReference>
<dbReference type="Gene3D" id="3.30.1060.10">
    <property type="entry name" value="Peptide methionine sulphoxide reductase MsrA"/>
    <property type="match status" value="1"/>
</dbReference>
<dbReference type="HAMAP" id="MF_01401">
    <property type="entry name" value="MsrA"/>
    <property type="match status" value="1"/>
</dbReference>
<dbReference type="InterPro" id="IPR002569">
    <property type="entry name" value="Met_Sox_Rdtase_MsrA_dom"/>
</dbReference>
<dbReference type="InterPro" id="IPR036509">
    <property type="entry name" value="Met_Sox_Rdtase_MsrA_sf"/>
</dbReference>
<dbReference type="NCBIfam" id="TIGR00401">
    <property type="entry name" value="msrA"/>
    <property type="match status" value="1"/>
</dbReference>
<dbReference type="PANTHER" id="PTHR43774">
    <property type="entry name" value="PEPTIDE METHIONINE SULFOXIDE REDUCTASE"/>
    <property type="match status" value="1"/>
</dbReference>
<dbReference type="PANTHER" id="PTHR43774:SF1">
    <property type="entry name" value="PEPTIDE METHIONINE SULFOXIDE REDUCTASE MSRA 2"/>
    <property type="match status" value="1"/>
</dbReference>
<dbReference type="Pfam" id="PF01625">
    <property type="entry name" value="PMSR"/>
    <property type="match status" value="1"/>
</dbReference>
<dbReference type="SUPFAM" id="SSF55068">
    <property type="entry name" value="Peptide methionine sulfoxide reductase"/>
    <property type="match status" value="1"/>
</dbReference>
<comment type="function">
    <text evidence="1">Has an important function as a repair enzyme for proteins that have been inactivated by oxidation. Catalyzes the reversible oxidation-reduction of methionine sulfoxide in proteins to methionine.</text>
</comment>
<comment type="catalytic activity">
    <reaction evidence="1">
        <text>L-methionyl-[protein] + [thioredoxin]-disulfide + H2O = L-methionyl-(S)-S-oxide-[protein] + [thioredoxin]-dithiol</text>
        <dbReference type="Rhea" id="RHEA:14217"/>
        <dbReference type="Rhea" id="RHEA-COMP:10698"/>
        <dbReference type="Rhea" id="RHEA-COMP:10700"/>
        <dbReference type="Rhea" id="RHEA-COMP:12313"/>
        <dbReference type="Rhea" id="RHEA-COMP:12315"/>
        <dbReference type="ChEBI" id="CHEBI:15377"/>
        <dbReference type="ChEBI" id="CHEBI:16044"/>
        <dbReference type="ChEBI" id="CHEBI:29950"/>
        <dbReference type="ChEBI" id="CHEBI:44120"/>
        <dbReference type="ChEBI" id="CHEBI:50058"/>
        <dbReference type="EC" id="1.8.4.11"/>
    </reaction>
</comment>
<comment type="catalytic activity">
    <reaction evidence="1">
        <text>[thioredoxin]-disulfide + L-methionine + H2O = L-methionine (S)-S-oxide + [thioredoxin]-dithiol</text>
        <dbReference type="Rhea" id="RHEA:19993"/>
        <dbReference type="Rhea" id="RHEA-COMP:10698"/>
        <dbReference type="Rhea" id="RHEA-COMP:10700"/>
        <dbReference type="ChEBI" id="CHEBI:15377"/>
        <dbReference type="ChEBI" id="CHEBI:29950"/>
        <dbReference type="ChEBI" id="CHEBI:50058"/>
        <dbReference type="ChEBI" id="CHEBI:57844"/>
        <dbReference type="ChEBI" id="CHEBI:58772"/>
        <dbReference type="EC" id="1.8.4.11"/>
    </reaction>
</comment>
<comment type="similarity">
    <text evidence="1">Belongs to the MsrA Met sulfoxide reductase family.</text>
</comment>
<reference key="1">
    <citation type="submission" date="2007-05" db="EMBL/GenBank/DDBJ databases">
        <title>Complete sequence of chromosome of Psychrobacter sp. PRwf-1.</title>
        <authorList>
            <consortium name="US DOE Joint Genome Institute"/>
            <person name="Copeland A."/>
            <person name="Lucas S."/>
            <person name="Lapidus A."/>
            <person name="Barry K."/>
            <person name="Detter J.C."/>
            <person name="Glavina del Rio T."/>
            <person name="Hammon N."/>
            <person name="Israni S."/>
            <person name="Dalin E."/>
            <person name="Tice H."/>
            <person name="Pitluck S."/>
            <person name="Chain P."/>
            <person name="Malfatti S."/>
            <person name="Shin M."/>
            <person name="Vergez L."/>
            <person name="Schmutz J."/>
            <person name="Larimer F."/>
            <person name="Land M."/>
            <person name="Hauser L."/>
            <person name="Kyrpides N."/>
            <person name="Kim E."/>
            <person name="Tiedje J."/>
            <person name="Richardson P."/>
        </authorList>
    </citation>
    <scope>NUCLEOTIDE SEQUENCE [LARGE SCALE GENOMIC DNA]</scope>
    <source>
        <strain>PRwf-1</strain>
    </source>
</reference>
<accession>A5WC53</accession>
<proteinExistence type="inferred from homology"/>
<keyword id="KW-0560">Oxidoreductase</keyword>
<organism>
    <name type="scientific">Psychrobacter sp. (strain PRwf-1)</name>
    <dbReference type="NCBI Taxonomy" id="349106"/>
    <lineage>
        <taxon>Bacteria</taxon>
        <taxon>Pseudomonadati</taxon>
        <taxon>Pseudomonadota</taxon>
        <taxon>Gammaproteobacteria</taxon>
        <taxon>Moraxellales</taxon>
        <taxon>Moraxellaceae</taxon>
        <taxon>Psychrobacter</taxon>
    </lineage>
</organism>
<gene>
    <name evidence="1" type="primary">msrA</name>
    <name type="ordered locus">PsycPRwf_0289</name>
</gene>